<comment type="function">
    <text evidence="2">Cell wall formation.</text>
</comment>
<comment type="catalytic activity">
    <reaction evidence="2">
        <text>2 D-alanine + ATP = D-alanyl-D-alanine + ADP + phosphate + H(+)</text>
        <dbReference type="Rhea" id="RHEA:11224"/>
        <dbReference type="ChEBI" id="CHEBI:15378"/>
        <dbReference type="ChEBI" id="CHEBI:30616"/>
        <dbReference type="ChEBI" id="CHEBI:43474"/>
        <dbReference type="ChEBI" id="CHEBI:57416"/>
        <dbReference type="ChEBI" id="CHEBI:57822"/>
        <dbReference type="ChEBI" id="CHEBI:456216"/>
        <dbReference type="EC" id="6.3.2.4"/>
    </reaction>
</comment>
<comment type="cofactor">
    <cofactor evidence="1">
        <name>Mg(2+)</name>
        <dbReference type="ChEBI" id="CHEBI:18420"/>
    </cofactor>
    <cofactor evidence="1">
        <name>Mn(2+)</name>
        <dbReference type="ChEBI" id="CHEBI:29035"/>
    </cofactor>
    <text evidence="1">Binds 2 magnesium or manganese ions per subunit.</text>
</comment>
<comment type="pathway">
    <text evidence="2">Cell wall biogenesis; peptidoglycan biosynthesis.</text>
</comment>
<comment type="subcellular location">
    <subcellularLocation>
        <location evidence="2">Cytoplasm</location>
    </subcellularLocation>
</comment>
<comment type="similarity">
    <text evidence="2">Belongs to the D-alanine--D-alanine ligase family.</text>
</comment>
<sequence length="304" mass="33852">MRIGVIMGGVSSEKQVSIMTGNEMIANLDKNKYEIVPITLNEKMDLIEKAKDIDFALLALHGKYGEDGTVQGTLESLGIPYSGSNMLSSGICMDKNISKKILRYEGIETPDWIELTKMEDLNFDELDKLGFPLVVKPNSGGSSVGVKIVYDKDELISMLETVFEWDSEVVIEKYIKGEEITCSIFDGKQLPIISIRHAAEFFDYNAKYDDASTIEEVIELPAELKERVNKASLACYKALKCSVYARVDMMVKDGIPYVMEVNTLPGMTQASLLPKSADAAGIHYSKLLDMIIETSLRVRKEEGF</sequence>
<reference key="1">
    <citation type="submission" date="2008-10" db="EMBL/GenBank/DDBJ databases">
        <title>Genome sequence of Bacillus anthracis str. CDC 684.</title>
        <authorList>
            <person name="Dodson R.J."/>
            <person name="Munk A.C."/>
            <person name="Brettin T."/>
            <person name="Bruce D."/>
            <person name="Detter C."/>
            <person name="Tapia R."/>
            <person name="Han C."/>
            <person name="Sutton G."/>
            <person name="Sims D."/>
        </authorList>
    </citation>
    <scope>NUCLEOTIDE SEQUENCE [LARGE SCALE GENOMIC DNA]</scope>
    <source>
        <strain>CDC 684 / NRRL 3495</strain>
    </source>
</reference>
<dbReference type="EC" id="6.3.2.4" evidence="2"/>
<dbReference type="EMBL" id="CP001215">
    <property type="protein sequence ID" value="ACP12299.1"/>
    <property type="molecule type" value="Genomic_DNA"/>
</dbReference>
<dbReference type="SMR" id="C3LHM9"/>
<dbReference type="KEGG" id="bah:BAMEG_1985"/>
<dbReference type="HOGENOM" id="CLU_039268_1_1_9"/>
<dbReference type="UniPathway" id="UPA00219"/>
<dbReference type="GO" id="GO:0005737">
    <property type="term" value="C:cytoplasm"/>
    <property type="evidence" value="ECO:0007669"/>
    <property type="project" value="UniProtKB-SubCell"/>
</dbReference>
<dbReference type="GO" id="GO:0005524">
    <property type="term" value="F:ATP binding"/>
    <property type="evidence" value="ECO:0007669"/>
    <property type="project" value="UniProtKB-KW"/>
</dbReference>
<dbReference type="GO" id="GO:0008716">
    <property type="term" value="F:D-alanine-D-alanine ligase activity"/>
    <property type="evidence" value="ECO:0007669"/>
    <property type="project" value="UniProtKB-UniRule"/>
</dbReference>
<dbReference type="GO" id="GO:0046872">
    <property type="term" value="F:metal ion binding"/>
    <property type="evidence" value="ECO:0007669"/>
    <property type="project" value="UniProtKB-KW"/>
</dbReference>
<dbReference type="GO" id="GO:0071555">
    <property type="term" value="P:cell wall organization"/>
    <property type="evidence" value="ECO:0007669"/>
    <property type="project" value="UniProtKB-KW"/>
</dbReference>
<dbReference type="GO" id="GO:0009252">
    <property type="term" value="P:peptidoglycan biosynthetic process"/>
    <property type="evidence" value="ECO:0007669"/>
    <property type="project" value="UniProtKB-UniRule"/>
</dbReference>
<dbReference type="GO" id="GO:0008360">
    <property type="term" value="P:regulation of cell shape"/>
    <property type="evidence" value="ECO:0007669"/>
    <property type="project" value="UniProtKB-KW"/>
</dbReference>
<dbReference type="FunFam" id="3.30.470.20:FF:000074">
    <property type="entry name" value="D-alanine--D-alanine ligase"/>
    <property type="match status" value="1"/>
</dbReference>
<dbReference type="FunFam" id="3.40.50.20:FF:000031">
    <property type="entry name" value="D-alanine--D-alanine ligase"/>
    <property type="match status" value="1"/>
</dbReference>
<dbReference type="Gene3D" id="3.40.50.20">
    <property type="match status" value="1"/>
</dbReference>
<dbReference type="Gene3D" id="3.30.1490.20">
    <property type="entry name" value="ATP-grasp fold, A domain"/>
    <property type="match status" value="1"/>
</dbReference>
<dbReference type="Gene3D" id="3.30.470.20">
    <property type="entry name" value="ATP-grasp fold, B domain"/>
    <property type="match status" value="1"/>
</dbReference>
<dbReference type="HAMAP" id="MF_00047">
    <property type="entry name" value="Dala_Dala_lig"/>
    <property type="match status" value="1"/>
</dbReference>
<dbReference type="InterPro" id="IPR011761">
    <property type="entry name" value="ATP-grasp"/>
</dbReference>
<dbReference type="InterPro" id="IPR013815">
    <property type="entry name" value="ATP_grasp_subdomain_1"/>
</dbReference>
<dbReference type="InterPro" id="IPR000291">
    <property type="entry name" value="D-Ala_lig_Van_CS"/>
</dbReference>
<dbReference type="InterPro" id="IPR005905">
    <property type="entry name" value="D_ala_D_ala"/>
</dbReference>
<dbReference type="InterPro" id="IPR011095">
    <property type="entry name" value="Dala_Dala_lig_C"/>
</dbReference>
<dbReference type="InterPro" id="IPR011127">
    <property type="entry name" value="Dala_Dala_lig_N"/>
</dbReference>
<dbReference type="InterPro" id="IPR016185">
    <property type="entry name" value="PreATP-grasp_dom_sf"/>
</dbReference>
<dbReference type="NCBIfam" id="TIGR01205">
    <property type="entry name" value="D_ala_D_alaTIGR"/>
    <property type="match status" value="1"/>
</dbReference>
<dbReference type="NCBIfam" id="NF002378">
    <property type="entry name" value="PRK01372.1"/>
    <property type="match status" value="1"/>
</dbReference>
<dbReference type="PANTHER" id="PTHR23132">
    <property type="entry name" value="D-ALANINE--D-ALANINE LIGASE"/>
    <property type="match status" value="1"/>
</dbReference>
<dbReference type="PANTHER" id="PTHR23132:SF23">
    <property type="entry name" value="D-ALANINE--D-ALANINE LIGASE B"/>
    <property type="match status" value="1"/>
</dbReference>
<dbReference type="Pfam" id="PF07478">
    <property type="entry name" value="Dala_Dala_lig_C"/>
    <property type="match status" value="1"/>
</dbReference>
<dbReference type="Pfam" id="PF01820">
    <property type="entry name" value="Dala_Dala_lig_N"/>
    <property type="match status" value="2"/>
</dbReference>
<dbReference type="PIRSF" id="PIRSF039102">
    <property type="entry name" value="Ddl/VanB"/>
    <property type="match status" value="1"/>
</dbReference>
<dbReference type="SMART" id="SM01209">
    <property type="entry name" value="GARS_A"/>
    <property type="match status" value="1"/>
</dbReference>
<dbReference type="SUPFAM" id="SSF56059">
    <property type="entry name" value="Glutathione synthetase ATP-binding domain-like"/>
    <property type="match status" value="1"/>
</dbReference>
<dbReference type="SUPFAM" id="SSF52440">
    <property type="entry name" value="PreATP-grasp domain"/>
    <property type="match status" value="1"/>
</dbReference>
<dbReference type="PROSITE" id="PS50975">
    <property type="entry name" value="ATP_GRASP"/>
    <property type="match status" value="1"/>
</dbReference>
<dbReference type="PROSITE" id="PS00843">
    <property type="entry name" value="DALA_DALA_LIGASE_1"/>
    <property type="match status" value="1"/>
</dbReference>
<dbReference type="PROSITE" id="PS00844">
    <property type="entry name" value="DALA_DALA_LIGASE_2"/>
    <property type="match status" value="1"/>
</dbReference>
<protein>
    <recommendedName>
        <fullName evidence="2">D-alanine--D-alanine ligase</fullName>
        <ecNumber evidence="2">6.3.2.4</ecNumber>
    </recommendedName>
    <alternativeName>
        <fullName evidence="2">D-Ala-D-Ala ligase</fullName>
    </alternativeName>
    <alternativeName>
        <fullName evidence="2">D-alanylalanine synthetase</fullName>
    </alternativeName>
</protein>
<proteinExistence type="inferred from homology"/>
<name>DDL_BACAC</name>
<evidence type="ECO:0000250" key="1"/>
<evidence type="ECO:0000255" key="2">
    <source>
        <dbReference type="HAMAP-Rule" id="MF_00047"/>
    </source>
</evidence>
<keyword id="KW-0067">ATP-binding</keyword>
<keyword id="KW-0133">Cell shape</keyword>
<keyword id="KW-0961">Cell wall biogenesis/degradation</keyword>
<keyword id="KW-0963">Cytoplasm</keyword>
<keyword id="KW-0436">Ligase</keyword>
<keyword id="KW-0460">Magnesium</keyword>
<keyword id="KW-0464">Manganese</keyword>
<keyword id="KW-0479">Metal-binding</keyword>
<keyword id="KW-0547">Nucleotide-binding</keyword>
<keyword id="KW-0573">Peptidoglycan synthesis</keyword>
<accession>C3LHM9</accession>
<organism>
    <name type="scientific">Bacillus anthracis (strain CDC 684 / NRRL 3495)</name>
    <dbReference type="NCBI Taxonomy" id="568206"/>
    <lineage>
        <taxon>Bacteria</taxon>
        <taxon>Bacillati</taxon>
        <taxon>Bacillota</taxon>
        <taxon>Bacilli</taxon>
        <taxon>Bacillales</taxon>
        <taxon>Bacillaceae</taxon>
        <taxon>Bacillus</taxon>
        <taxon>Bacillus cereus group</taxon>
    </lineage>
</organism>
<gene>
    <name evidence="2" type="primary">ddl</name>
    <name type="ordered locus">BAMEG_1985</name>
</gene>
<feature type="chain" id="PRO_1000117448" description="D-alanine--D-alanine ligase">
    <location>
        <begin position="1"/>
        <end position="304"/>
    </location>
</feature>
<feature type="domain" description="ATP-grasp" evidence="2">
    <location>
        <begin position="99"/>
        <end position="293"/>
    </location>
</feature>
<feature type="binding site" evidence="2">
    <location>
        <begin position="126"/>
        <end position="181"/>
    </location>
    <ligand>
        <name>ATP</name>
        <dbReference type="ChEBI" id="CHEBI:30616"/>
    </ligand>
</feature>
<feature type="binding site" evidence="2">
    <location>
        <position position="248"/>
    </location>
    <ligand>
        <name>Mg(2+)</name>
        <dbReference type="ChEBI" id="CHEBI:18420"/>
        <label>1</label>
    </ligand>
</feature>
<feature type="binding site" evidence="2">
    <location>
        <position position="260"/>
    </location>
    <ligand>
        <name>Mg(2+)</name>
        <dbReference type="ChEBI" id="CHEBI:18420"/>
        <label>1</label>
    </ligand>
</feature>
<feature type="binding site" evidence="2">
    <location>
        <position position="260"/>
    </location>
    <ligand>
        <name>Mg(2+)</name>
        <dbReference type="ChEBI" id="CHEBI:18420"/>
        <label>2</label>
    </ligand>
</feature>
<feature type="binding site" evidence="2">
    <location>
        <position position="262"/>
    </location>
    <ligand>
        <name>Mg(2+)</name>
        <dbReference type="ChEBI" id="CHEBI:18420"/>
        <label>2</label>
    </ligand>
</feature>